<accession>B2JJF7</accession>
<organism>
    <name type="scientific">Paraburkholderia phymatum (strain DSM 17167 / CIP 108236 / LMG 21445 / STM815)</name>
    <name type="common">Burkholderia phymatum</name>
    <dbReference type="NCBI Taxonomy" id="391038"/>
    <lineage>
        <taxon>Bacteria</taxon>
        <taxon>Pseudomonadati</taxon>
        <taxon>Pseudomonadota</taxon>
        <taxon>Betaproteobacteria</taxon>
        <taxon>Burkholderiales</taxon>
        <taxon>Burkholderiaceae</taxon>
        <taxon>Paraburkholderia</taxon>
    </lineage>
</organism>
<keyword id="KW-0004">4Fe-4S</keyword>
<keyword id="KW-0408">Iron</keyword>
<keyword id="KW-0411">Iron-sulfur</keyword>
<keyword id="KW-0456">Lyase</keyword>
<keyword id="KW-0479">Metal-binding</keyword>
<keyword id="KW-1185">Reference proteome</keyword>
<keyword id="KW-0949">S-adenosyl-L-methionine</keyword>
<keyword id="KW-0784">Thiamine biosynthesis</keyword>
<keyword id="KW-0862">Zinc</keyword>
<name>THIC_PARP8</name>
<reference key="1">
    <citation type="journal article" date="2014" name="Stand. Genomic Sci.">
        <title>Complete genome sequence of Burkholderia phymatum STM815(T), a broad host range and efficient nitrogen-fixing symbiont of Mimosa species.</title>
        <authorList>
            <person name="Moulin L."/>
            <person name="Klonowska A."/>
            <person name="Caroline B."/>
            <person name="Booth K."/>
            <person name="Vriezen J.A."/>
            <person name="Melkonian R."/>
            <person name="James E.K."/>
            <person name="Young J.P."/>
            <person name="Bena G."/>
            <person name="Hauser L."/>
            <person name="Land M."/>
            <person name="Kyrpides N."/>
            <person name="Bruce D."/>
            <person name="Chain P."/>
            <person name="Copeland A."/>
            <person name="Pitluck S."/>
            <person name="Woyke T."/>
            <person name="Lizotte-Waniewski M."/>
            <person name="Bristow J."/>
            <person name="Riley M."/>
        </authorList>
    </citation>
    <scope>NUCLEOTIDE SEQUENCE [LARGE SCALE GENOMIC DNA]</scope>
    <source>
        <strain>DSM 17167 / CIP 108236 / LMG 21445 / STM815</strain>
    </source>
</reference>
<feature type="chain" id="PRO_1000093195" description="Phosphomethylpyrimidine synthase">
    <location>
        <begin position="1"/>
        <end position="643"/>
    </location>
</feature>
<feature type="binding site" evidence="1">
    <location>
        <position position="248"/>
    </location>
    <ligand>
        <name>substrate</name>
    </ligand>
</feature>
<feature type="binding site" evidence="1">
    <location>
        <position position="277"/>
    </location>
    <ligand>
        <name>substrate</name>
    </ligand>
</feature>
<feature type="binding site" evidence="1">
    <location>
        <position position="306"/>
    </location>
    <ligand>
        <name>substrate</name>
    </ligand>
</feature>
<feature type="binding site" evidence="1">
    <location>
        <position position="342"/>
    </location>
    <ligand>
        <name>substrate</name>
    </ligand>
</feature>
<feature type="binding site" evidence="1">
    <location>
        <begin position="362"/>
        <end position="364"/>
    </location>
    <ligand>
        <name>substrate</name>
    </ligand>
</feature>
<feature type="binding site" evidence="1">
    <location>
        <begin position="403"/>
        <end position="406"/>
    </location>
    <ligand>
        <name>substrate</name>
    </ligand>
</feature>
<feature type="binding site" evidence="1">
    <location>
        <position position="442"/>
    </location>
    <ligand>
        <name>substrate</name>
    </ligand>
</feature>
<feature type="binding site" evidence="1">
    <location>
        <position position="446"/>
    </location>
    <ligand>
        <name>Zn(2+)</name>
        <dbReference type="ChEBI" id="CHEBI:29105"/>
    </ligand>
</feature>
<feature type="binding site" evidence="1">
    <location>
        <position position="469"/>
    </location>
    <ligand>
        <name>substrate</name>
    </ligand>
</feature>
<feature type="binding site" evidence="1">
    <location>
        <position position="510"/>
    </location>
    <ligand>
        <name>Zn(2+)</name>
        <dbReference type="ChEBI" id="CHEBI:29105"/>
    </ligand>
</feature>
<feature type="binding site" evidence="1">
    <location>
        <position position="590"/>
    </location>
    <ligand>
        <name>[4Fe-4S] cluster</name>
        <dbReference type="ChEBI" id="CHEBI:49883"/>
        <note>4Fe-4S-S-AdoMet</note>
    </ligand>
</feature>
<feature type="binding site" evidence="1">
    <location>
        <position position="593"/>
    </location>
    <ligand>
        <name>[4Fe-4S] cluster</name>
        <dbReference type="ChEBI" id="CHEBI:49883"/>
        <note>4Fe-4S-S-AdoMet</note>
    </ligand>
</feature>
<feature type="binding site" evidence="1">
    <location>
        <position position="598"/>
    </location>
    <ligand>
        <name>[4Fe-4S] cluster</name>
        <dbReference type="ChEBI" id="CHEBI:49883"/>
        <note>4Fe-4S-S-AdoMet</note>
    </ligand>
</feature>
<comment type="function">
    <text evidence="1">Catalyzes the synthesis of the hydroxymethylpyrimidine phosphate (HMP-P) moiety of thiamine from aminoimidazole ribotide (AIR) in a radical S-adenosyl-L-methionine (SAM)-dependent reaction.</text>
</comment>
<comment type="catalytic activity">
    <reaction evidence="1">
        <text>5-amino-1-(5-phospho-beta-D-ribosyl)imidazole + S-adenosyl-L-methionine = 4-amino-2-methyl-5-(phosphooxymethyl)pyrimidine + CO + 5'-deoxyadenosine + formate + L-methionine + 3 H(+)</text>
        <dbReference type="Rhea" id="RHEA:24840"/>
        <dbReference type="ChEBI" id="CHEBI:15378"/>
        <dbReference type="ChEBI" id="CHEBI:15740"/>
        <dbReference type="ChEBI" id="CHEBI:17245"/>
        <dbReference type="ChEBI" id="CHEBI:17319"/>
        <dbReference type="ChEBI" id="CHEBI:57844"/>
        <dbReference type="ChEBI" id="CHEBI:58354"/>
        <dbReference type="ChEBI" id="CHEBI:59789"/>
        <dbReference type="ChEBI" id="CHEBI:137981"/>
        <dbReference type="EC" id="4.1.99.17"/>
    </reaction>
</comment>
<comment type="cofactor">
    <cofactor evidence="1">
        <name>[4Fe-4S] cluster</name>
        <dbReference type="ChEBI" id="CHEBI:49883"/>
    </cofactor>
    <text evidence="1">Binds 1 [4Fe-4S] cluster per subunit. The cluster is coordinated with 3 cysteines and an exchangeable S-adenosyl-L-methionine.</text>
</comment>
<comment type="pathway">
    <text evidence="1">Cofactor biosynthesis; thiamine diphosphate biosynthesis.</text>
</comment>
<comment type="subunit">
    <text evidence="1">Homodimer.</text>
</comment>
<comment type="similarity">
    <text evidence="1">Belongs to the ThiC family.</text>
</comment>
<protein>
    <recommendedName>
        <fullName evidence="1">Phosphomethylpyrimidine synthase</fullName>
        <ecNumber evidence="1">4.1.99.17</ecNumber>
    </recommendedName>
    <alternativeName>
        <fullName evidence="1">Hydroxymethylpyrimidine phosphate synthase</fullName>
        <shortName evidence="1">HMP-P synthase</shortName>
        <shortName evidence="1">HMP-phosphate synthase</shortName>
        <shortName evidence="1">HMPP synthase</shortName>
    </alternativeName>
    <alternativeName>
        <fullName evidence="1">Thiamine biosynthesis protein ThiC</fullName>
    </alternativeName>
</protein>
<gene>
    <name evidence="1" type="primary">thiC</name>
    <name type="ordered locus">Bphy_1518</name>
</gene>
<evidence type="ECO:0000255" key="1">
    <source>
        <dbReference type="HAMAP-Rule" id="MF_00089"/>
    </source>
</evidence>
<sequence>MNANPKFISANAHVDEAAVAPLPNSRKVYVTGSQPDIRVPMREITQADTPTGFGGEKNPPIYVYDTSGPYTDPDAKIDIRAGLPALRQRWIEARGDTESLQGLSSEYGRERAADPATAELRFPGLHRTPRRAQPGKNVSQMHYAKQGIITPEMEYIAIRENQRRAEYLESLKASGPNGAKLAAMMGRQHPGQAFGATAFGPNGLQEITPEFVREEVARGRAIIPANINHPESEPMIIGRNFLVKINANIGNSAVTSSIGEEVDKMTWAIRWGGDTVMDLSTGKHIHETREWIIRNSPVPIGTVPIYQALEKVNGKAEDLTWEIFRDTLIEQAEQGVDYFTIHAGVRLQYVPLTANRMTGIVSRGGSIMAKWCLAHHKESFLYEHFEDICEIMKAYDVSFSLGDGLRPGSIYDANDEAQLGELKTLGELTQIAWKHDVQVMIEGPGHVPMQLIKENMDLQLEWCDEAPFYTLGPLTTDIAPGYDHITSGIGAAMIGWFGTAMLCYVTPKEHLGLPNKDDVKTGIITYKLAAHAADLAKGHPGAQVRDNALSKARFEFRWEDQFNLGLDPDKAREFHDETLPKDSAKVAHFCSMCGPHFCSMKITQDVRDYAAKEGMSDADALKKGMEVKAVEFIKSGAEIYQRQ</sequence>
<dbReference type="EC" id="4.1.99.17" evidence="1"/>
<dbReference type="EMBL" id="CP001043">
    <property type="protein sequence ID" value="ACC70700.1"/>
    <property type="molecule type" value="Genomic_DNA"/>
</dbReference>
<dbReference type="RefSeq" id="WP_012400912.1">
    <property type="nucleotide sequence ID" value="NC_010622.1"/>
</dbReference>
<dbReference type="SMR" id="B2JJF7"/>
<dbReference type="STRING" id="391038.Bphy_1518"/>
<dbReference type="KEGG" id="bph:Bphy_1518"/>
<dbReference type="eggNOG" id="COG0422">
    <property type="taxonomic scope" value="Bacteria"/>
</dbReference>
<dbReference type="HOGENOM" id="CLU_013181_2_1_4"/>
<dbReference type="OrthoDB" id="9805897at2"/>
<dbReference type="UniPathway" id="UPA00060"/>
<dbReference type="Proteomes" id="UP000001192">
    <property type="component" value="Chromosome 1"/>
</dbReference>
<dbReference type="GO" id="GO:0005829">
    <property type="term" value="C:cytosol"/>
    <property type="evidence" value="ECO:0007669"/>
    <property type="project" value="TreeGrafter"/>
</dbReference>
<dbReference type="GO" id="GO:0051539">
    <property type="term" value="F:4 iron, 4 sulfur cluster binding"/>
    <property type="evidence" value="ECO:0007669"/>
    <property type="project" value="UniProtKB-KW"/>
</dbReference>
<dbReference type="GO" id="GO:0016830">
    <property type="term" value="F:carbon-carbon lyase activity"/>
    <property type="evidence" value="ECO:0007669"/>
    <property type="project" value="InterPro"/>
</dbReference>
<dbReference type="GO" id="GO:0008270">
    <property type="term" value="F:zinc ion binding"/>
    <property type="evidence" value="ECO:0007669"/>
    <property type="project" value="UniProtKB-UniRule"/>
</dbReference>
<dbReference type="GO" id="GO:0009228">
    <property type="term" value="P:thiamine biosynthetic process"/>
    <property type="evidence" value="ECO:0007669"/>
    <property type="project" value="UniProtKB-KW"/>
</dbReference>
<dbReference type="GO" id="GO:0009229">
    <property type="term" value="P:thiamine diphosphate biosynthetic process"/>
    <property type="evidence" value="ECO:0007669"/>
    <property type="project" value="UniProtKB-UniRule"/>
</dbReference>
<dbReference type="FunFam" id="3.20.20.540:FF:000001">
    <property type="entry name" value="Phosphomethylpyrimidine synthase"/>
    <property type="match status" value="1"/>
</dbReference>
<dbReference type="Gene3D" id="6.10.250.620">
    <property type="match status" value="1"/>
</dbReference>
<dbReference type="Gene3D" id="3.20.20.540">
    <property type="entry name" value="Radical SAM ThiC family, central domain"/>
    <property type="match status" value="1"/>
</dbReference>
<dbReference type="HAMAP" id="MF_00089">
    <property type="entry name" value="ThiC"/>
    <property type="match status" value="1"/>
</dbReference>
<dbReference type="InterPro" id="IPR037509">
    <property type="entry name" value="ThiC"/>
</dbReference>
<dbReference type="InterPro" id="IPR025747">
    <property type="entry name" value="ThiC-associated_dom"/>
</dbReference>
<dbReference type="InterPro" id="IPR038521">
    <property type="entry name" value="ThiC/Bza_core_dom"/>
</dbReference>
<dbReference type="InterPro" id="IPR002817">
    <property type="entry name" value="ThiC/BzaA/B"/>
</dbReference>
<dbReference type="NCBIfam" id="NF006763">
    <property type="entry name" value="PRK09284.1"/>
    <property type="match status" value="1"/>
</dbReference>
<dbReference type="NCBIfam" id="NF009895">
    <property type="entry name" value="PRK13352.1"/>
    <property type="match status" value="1"/>
</dbReference>
<dbReference type="NCBIfam" id="TIGR00190">
    <property type="entry name" value="thiC"/>
    <property type="match status" value="1"/>
</dbReference>
<dbReference type="PANTHER" id="PTHR30557:SF1">
    <property type="entry name" value="PHOSPHOMETHYLPYRIMIDINE SYNTHASE, CHLOROPLASTIC"/>
    <property type="match status" value="1"/>
</dbReference>
<dbReference type="PANTHER" id="PTHR30557">
    <property type="entry name" value="THIAMINE BIOSYNTHESIS PROTEIN THIC"/>
    <property type="match status" value="1"/>
</dbReference>
<dbReference type="Pfam" id="PF13667">
    <property type="entry name" value="ThiC-associated"/>
    <property type="match status" value="1"/>
</dbReference>
<dbReference type="Pfam" id="PF01964">
    <property type="entry name" value="ThiC_Rad_SAM"/>
    <property type="match status" value="1"/>
</dbReference>
<dbReference type="SFLD" id="SFLDF00407">
    <property type="entry name" value="phosphomethylpyrimidine_syntha"/>
    <property type="match status" value="1"/>
</dbReference>
<dbReference type="SFLD" id="SFLDG01114">
    <property type="entry name" value="phosphomethylpyrimidine_syntha"/>
    <property type="match status" value="1"/>
</dbReference>
<dbReference type="SFLD" id="SFLDS00113">
    <property type="entry name" value="Radical_SAM_Phosphomethylpyrim"/>
    <property type="match status" value="1"/>
</dbReference>
<proteinExistence type="inferred from homology"/>